<reference key="1">
    <citation type="journal article" date="2002" name="Proc. Natl. Acad. Sci. U.S.A.">
        <title>Genome sequence of the hyperthermophilic crenarchaeon Pyrobaculum aerophilum.</title>
        <authorList>
            <person name="Fitz-Gibbon S.T."/>
            <person name="Ladner H."/>
            <person name="Kim U.-J."/>
            <person name="Stetter K.O."/>
            <person name="Simon M.I."/>
            <person name="Miller J.H."/>
        </authorList>
    </citation>
    <scope>NUCLEOTIDE SEQUENCE [LARGE SCALE GENOMIC DNA]</scope>
    <source>
        <strain>ATCC 51768 / DSM 7523 / JCM 9630 / CIP 104966 / NBRC 100827 / IM2</strain>
    </source>
</reference>
<name>ARLY_PYRAE</name>
<keyword id="KW-0028">Amino-acid biosynthesis</keyword>
<keyword id="KW-0055">Arginine biosynthesis</keyword>
<keyword id="KW-0963">Cytoplasm</keyword>
<keyword id="KW-0456">Lyase</keyword>
<keyword id="KW-1185">Reference proteome</keyword>
<accession>Q8ZU95</accession>
<gene>
    <name evidence="1" type="primary">argH</name>
    <name type="ordered locus">PAE2887</name>
</gene>
<organism>
    <name type="scientific">Pyrobaculum aerophilum (strain ATCC 51768 / DSM 7523 / JCM 9630 / CIP 104966 / NBRC 100827 / IM2)</name>
    <dbReference type="NCBI Taxonomy" id="178306"/>
    <lineage>
        <taxon>Archaea</taxon>
        <taxon>Thermoproteota</taxon>
        <taxon>Thermoprotei</taxon>
        <taxon>Thermoproteales</taxon>
        <taxon>Thermoproteaceae</taxon>
        <taxon>Pyrobaculum</taxon>
    </lineage>
</organism>
<protein>
    <recommendedName>
        <fullName evidence="1">Argininosuccinate lyase</fullName>
        <shortName evidence="1">ASAL</shortName>
        <ecNumber evidence="1">4.3.2.1</ecNumber>
    </recommendedName>
    <alternativeName>
        <fullName evidence="1">Arginosuccinase</fullName>
    </alternativeName>
</protein>
<dbReference type="EC" id="4.3.2.1" evidence="1"/>
<dbReference type="EMBL" id="AE009441">
    <property type="protein sequence ID" value="AAL64513.1"/>
    <property type="molecule type" value="Genomic_DNA"/>
</dbReference>
<dbReference type="RefSeq" id="WP_011008981.1">
    <property type="nucleotide sequence ID" value="NC_003364.1"/>
</dbReference>
<dbReference type="SMR" id="Q8ZU95"/>
<dbReference type="FunCoup" id="Q8ZU95">
    <property type="interactions" value="222"/>
</dbReference>
<dbReference type="STRING" id="178306.PAE2887"/>
<dbReference type="EnsemblBacteria" id="AAL64513">
    <property type="protein sequence ID" value="AAL64513"/>
    <property type="gene ID" value="PAE2887"/>
</dbReference>
<dbReference type="GeneID" id="1463675"/>
<dbReference type="KEGG" id="pai:PAE2887"/>
<dbReference type="PATRIC" id="fig|178306.9.peg.2158"/>
<dbReference type="eggNOG" id="arCOG01748">
    <property type="taxonomic scope" value="Archaea"/>
</dbReference>
<dbReference type="HOGENOM" id="CLU_027272_2_0_2"/>
<dbReference type="InParanoid" id="Q8ZU95"/>
<dbReference type="UniPathway" id="UPA00068">
    <property type="reaction ID" value="UER00114"/>
</dbReference>
<dbReference type="Proteomes" id="UP000002439">
    <property type="component" value="Chromosome"/>
</dbReference>
<dbReference type="GO" id="GO:0005829">
    <property type="term" value="C:cytosol"/>
    <property type="evidence" value="ECO:0000318"/>
    <property type="project" value="GO_Central"/>
</dbReference>
<dbReference type="GO" id="GO:0004056">
    <property type="term" value="F:argininosuccinate lyase activity"/>
    <property type="evidence" value="ECO:0000318"/>
    <property type="project" value="GO_Central"/>
</dbReference>
<dbReference type="GO" id="GO:0042450">
    <property type="term" value="P:arginine biosynthetic process via ornithine"/>
    <property type="evidence" value="ECO:0000318"/>
    <property type="project" value="GO_Central"/>
</dbReference>
<dbReference type="GO" id="GO:0006526">
    <property type="term" value="P:L-arginine biosynthetic process"/>
    <property type="evidence" value="ECO:0007669"/>
    <property type="project" value="UniProtKB-UniRule"/>
</dbReference>
<dbReference type="Gene3D" id="1.10.40.30">
    <property type="entry name" value="Fumarase/aspartase (C-terminal domain)"/>
    <property type="match status" value="1"/>
</dbReference>
<dbReference type="Gene3D" id="1.20.200.10">
    <property type="entry name" value="Fumarase/aspartase (Central domain)"/>
    <property type="match status" value="1"/>
</dbReference>
<dbReference type="Gene3D" id="1.10.275.10">
    <property type="entry name" value="Fumarase/aspartase (N-terminal domain)"/>
    <property type="match status" value="1"/>
</dbReference>
<dbReference type="HAMAP" id="MF_00006">
    <property type="entry name" value="Arg_succ_lyase"/>
    <property type="match status" value="1"/>
</dbReference>
<dbReference type="InterPro" id="IPR009049">
    <property type="entry name" value="Argininosuccinate_lyase"/>
</dbReference>
<dbReference type="InterPro" id="IPR024083">
    <property type="entry name" value="Fumarase/histidase_N"/>
</dbReference>
<dbReference type="InterPro" id="IPR000362">
    <property type="entry name" value="Fumarate_lyase_fam"/>
</dbReference>
<dbReference type="InterPro" id="IPR022761">
    <property type="entry name" value="Fumarate_lyase_N"/>
</dbReference>
<dbReference type="InterPro" id="IPR008948">
    <property type="entry name" value="L-Aspartase-like"/>
</dbReference>
<dbReference type="PANTHER" id="PTHR43814">
    <property type="entry name" value="ARGININOSUCCINATE LYASE"/>
    <property type="match status" value="1"/>
</dbReference>
<dbReference type="PANTHER" id="PTHR43814:SF1">
    <property type="entry name" value="ARGININOSUCCINATE LYASE"/>
    <property type="match status" value="1"/>
</dbReference>
<dbReference type="Pfam" id="PF00206">
    <property type="entry name" value="Lyase_1"/>
    <property type="match status" value="1"/>
</dbReference>
<dbReference type="PRINTS" id="PR00145">
    <property type="entry name" value="ARGSUCLYASE"/>
</dbReference>
<dbReference type="PRINTS" id="PR00149">
    <property type="entry name" value="FUMRATELYASE"/>
</dbReference>
<dbReference type="SUPFAM" id="SSF48557">
    <property type="entry name" value="L-aspartase-like"/>
    <property type="match status" value="1"/>
</dbReference>
<evidence type="ECO:0000255" key="1">
    <source>
        <dbReference type="HAMAP-Rule" id="MF_00006"/>
    </source>
</evidence>
<comment type="catalytic activity">
    <reaction evidence="1">
        <text>2-(N(omega)-L-arginino)succinate = fumarate + L-arginine</text>
        <dbReference type="Rhea" id="RHEA:24020"/>
        <dbReference type="ChEBI" id="CHEBI:29806"/>
        <dbReference type="ChEBI" id="CHEBI:32682"/>
        <dbReference type="ChEBI" id="CHEBI:57472"/>
        <dbReference type="EC" id="4.3.2.1"/>
    </reaction>
</comment>
<comment type="pathway">
    <text evidence="1">Amino-acid biosynthesis; L-arginine biosynthesis; L-arginine from L-ornithine and carbamoyl phosphate: step 3/3.</text>
</comment>
<comment type="subcellular location">
    <subcellularLocation>
        <location evidence="1">Cytoplasm</location>
    </subcellularLocation>
</comment>
<comment type="similarity">
    <text evidence="1">Belongs to the lyase 1 family. Argininosuccinate lyase subfamily.</text>
</comment>
<proteinExistence type="inferred from homology"/>
<feature type="chain" id="PRO_0000137867" description="Argininosuccinate lyase">
    <location>
        <begin position="1"/>
        <end position="429"/>
    </location>
</feature>
<sequence>MSFYRSWIGGTGDLVKKYTSSIKDDVELAEEVVRVMKGHVAHLVEIGSIPKEAGERIIKALEEVDASELLKEEFEDVHEALEKWLIDKLGEEIGGWVGLGRSRNDHVAAAIRLAALRKTERLKEEACRLRCALAKRALEYADCPMPSFTHFQPAQVITFGHYLLAIDELLAEFLHILRGVEDLLNRSPLGAGPAGGVRTPLDRRRLAELVGFKEVVENALYASGSRFFALALASAVVSFLAELSRAVDDFIRWNSPVVGYVNSPDSHVSTSSIMPHKRNLVTLEVLRARIAEALGHFAAMSALVMKVGMGYSLDLQEATRHLWAVLNIATEGMAVFRDFIENMAFNCEKSRKDAEAYFTTSSDTAEDEALKGVPFRKAYFQLASAIKAGTARLLTINEALKRPVYGSANTEEVKRAASRRLALCRPKPL</sequence>